<geneLocation type="plasmid">
    <name>pSymA</name>
    <name>megaplasmid 1</name>
</geneLocation>
<reference key="1">
    <citation type="journal article" date="1986" name="Nucleic Acids Res.">
        <title>Nucleotide sequence of Rhizobium meliloti RCR2011 genes involved in host specificity of nodulation.</title>
        <authorList>
            <person name="Debelle F."/>
            <person name="Sharma S.B."/>
        </authorList>
    </citation>
    <scope>NUCLEOTIDE SEQUENCE [GENOMIC DNA]</scope>
    <source>
        <strain>RCR2011 / SU47</strain>
    </source>
</reference>
<reference key="2">
    <citation type="journal article" date="1987" name="Genetics">
        <title>Extended region of nodulation genes in Rhizobium meliloti 1021. II. Nucleotide sequence, transcription start sites and protein products.</title>
        <authorList>
            <person name="Fisher R.F."/>
            <person name="Swanson J.A."/>
            <person name="Mulligan J.T."/>
            <person name="Long S.R."/>
        </authorList>
    </citation>
    <scope>NUCLEOTIDE SEQUENCE [GENOMIC DNA]</scope>
    <source>
        <strain>1021</strain>
    </source>
</reference>
<reference key="3">
    <citation type="journal article" date="2001" name="Proc. Natl. Acad. Sci. U.S.A.">
        <title>Nucleotide sequence and predicted functions of the entire Sinorhizobium meliloti pSymA megaplasmid.</title>
        <authorList>
            <person name="Barnett M.J."/>
            <person name="Fisher R.F."/>
            <person name="Jones T."/>
            <person name="Komp C."/>
            <person name="Abola A.P."/>
            <person name="Barloy-Hubler F."/>
            <person name="Bowser L."/>
            <person name="Capela D."/>
            <person name="Galibert F."/>
            <person name="Gouzy J."/>
            <person name="Gurjal M."/>
            <person name="Hong A."/>
            <person name="Huizar L."/>
            <person name="Hyman R.W."/>
            <person name="Kahn D."/>
            <person name="Kahn M.L."/>
            <person name="Kalman S."/>
            <person name="Keating D.H."/>
            <person name="Palm C."/>
            <person name="Peck M.C."/>
            <person name="Surzycki R."/>
            <person name="Wells D.H."/>
            <person name="Yeh K.-C."/>
            <person name="Davis R.W."/>
            <person name="Federspiel N.A."/>
            <person name="Long S.R."/>
        </authorList>
    </citation>
    <scope>NUCLEOTIDE SEQUENCE [LARGE SCALE GENOMIC DNA]</scope>
    <source>
        <strain>1021</strain>
    </source>
</reference>
<reference key="4">
    <citation type="journal article" date="2001" name="Science">
        <title>The composite genome of the legume symbiont Sinorhizobium meliloti.</title>
        <authorList>
            <person name="Galibert F."/>
            <person name="Finan T.M."/>
            <person name="Long S.R."/>
            <person name="Puehler A."/>
            <person name="Abola P."/>
            <person name="Ampe F."/>
            <person name="Barloy-Hubler F."/>
            <person name="Barnett M.J."/>
            <person name="Becker A."/>
            <person name="Boistard P."/>
            <person name="Bothe G."/>
            <person name="Boutry M."/>
            <person name="Bowser L."/>
            <person name="Buhrmester J."/>
            <person name="Cadieu E."/>
            <person name="Capela D."/>
            <person name="Chain P."/>
            <person name="Cowie A."/>
            <person name="Davis R.W."/>
            <person name="Dreano S."/>
            <person name="Federspiel N.A."/>
            <person name="Fisher R.F."/>
            <person name="Gloux S."/>
            <person name="Godrie T."/>
            <person name="Goffeau A."/>
            <person name="Golding B."/>
            <person name="Gouzy J."/>
            <person name="Gurjal M."/>
            <person name="Hernandez-Lucas I."/>
            <person name="Hong A."/>
            <person name="Huizar L."/>
            <person name="Hyman R.W."/>
            <person name="Jones T."/>
            <person name="Kahn D."/>
            <person name="Kahn M.L."/>
            <person name="Kalman S."/>
            <person name="Keating D.H."/>
            <person name="Kiss E."/>
            <person name="Komp C."/>
            <person name="Lelaure V."/>
            <person name="Masuy D."/>
            <person name="Palm C."/>
            <person name="Peck M.C."/>
            <person name="Pohl T.M."/>
            <person name="Portetelle D."/>
            <person name="Purnelle B."/>
            <person name="Ramsperger U."/>
            <person name="Surzycki R."/>
            <person name="Thebault P."/>
            <person name="Vandenbol M."/>
            <person name="Vorhoelter F.J."/>
            <person name="Weidner S."/>
            <person name="Wells D.H."/>
            <person name="Wong K."/>
            <person name="Yeh K.-C."/>
            <person name="Batut J."/>
        </authorList>
    </citation>
    <scope>NUCLEOTIDE SEQUENCE [LARGE SCALE GENOMIC DNA]</scope>
    <source>
        <strain>1021</strain>
    </source>
</reference>
<comment type="function">
    <text>Required for the formation of sulfated nod factor. Proposed to transfer activated sulfate (PAPS) to a N-acetylglucosamine of the nod factor.</text>
</comment>
<dbReference type="EC" id="2.8.2.-"/>
<dbReference type="EMBL" id="X04380">
    <property type="protein sequence ID" value="CAA27963.1"/>
    <property type="molecule type" value="Genomic_DNA"/>
</dbReference>
<dbReference type="EMBL" id="M37417">
    <property type="protein sequence ID" value="AAA26339.1"/>
    <property type="molecule type" value="Genomic_DNA"/>
</dbReference>
<dbReference type="EMBL" id="AE006469">
    <property type="protein sequence ID" value="AAK65122.1"/>
    <property type="molecule type" value="Genomic_DNA"/>
</dbReference>
<dbReference type="PIR" id="D24706">
    <property type="entry name" value="D24706"/>
</dbReference>
<dbReference type="PIR" id="H95319">
    <property type="entry name" value="H95319"/>
</dbReference>
<dbReference type="RefSeq" id="NP_435710.1">
    <property type="nucleotide sequence ID" value="NC_003037.1"/>
</dbReference>
<dbReference type="RefSeq" id="WP_010967447.1">
    <property type="nucleotide sequence ID" value="NC_003037.1"/>
</dbReference>
<dbReference type="SMR" id="P06236"/>
<dbReference type="EnsemblBacteria" id="AAK65122">
    <property type="protein sequence ID" value="AAK65122"/>
    <property type="gene ID" value="SMa0851"/>
</dbReference>
<dbReference type="KEGG" id="sme:SMa0851"/>
<dbReference type="HOGENOM" id="CLU_067802_0_0_5"/>
<dbReference type="OrthoDB" id="9800698at2"/>
<dbReference type="Proteomes" id="UP000001976">
    <property type="component" value="Plasmid pSymA"/>
</dbReference>
<dbReference type="GO" id="GO:0016740">
    <property type="term" value="F:transferase activity"/>
    <property type="evidence" value="ECO:0007669"/>
    <property type="project" value="UniProtKB-KW"/>
</dbReference>
<dbReference type="Gene3D" id="3.40.50.300">
    <property type="entry name" value="P-loop containing nucleotide triphosphate hydrolases"/>
    <property type="match status" value="1"/>
</dbReference>
<dbReference type="InterPro" id="IPR052796">
    <property type="entry name" value="Nod_factor_sulfotransferase"/>
</dbReference>
<dbReference type="InterPro" id="IPR027417">
    <property type="entry name" value="P-loop_NTPase"/>
</dbReference>
<dbReference type="PANTHER" id="PTHR32175">
    <property type="entry name" value="PROTEIN, PUTATIVE, EXPRESSED-RELATED"/>
    <property type="match status" value="1"/>
</dbReference>
<dbReference type="PANTHER" id="PTHR32175:SF26">
    <property type="entry name" value="PROTEIN, PUTATIVE, EXPRESSED-RELATED"/>
    <property type="match status" value="1"/>
</dbReference>
<dbReference type="Pfam" id="PF13469">
    <property type="entry name" value="Sulfotransfer_3"/>
    <property type="match status" value="1"/>
</dbReference>
<dbReference type="SUPFAM" id="SSF52540">
    <property type="entry name" value="P-loop containing nucleoside triphosphate hydrolases"/>
    <property type="match status" value="1"/>
</dbReference>
<accession>P06236</accession>
<keyword id="KW-0536">Nodulation</keyword>
<keyword id="KW-0614">Plasmid</keyword>
<keyword id="KW-1185">Reference proteome</keyword>
<keyword id="KW-0808">Transferase</keyword>
<feature type="chain" id="PRO_0000096905" description="Nodulation protein H">
    <location>
        <begin position="1"/>
        <end position="247"/>
    </location>
</feature>
<feature type="region of interest" description="Hydrophobic">
    <location>
        <begin position="1"/>
        <end position="17"/>
    </location>
</feature>
<sequence length="247" mass="28585">MTHSTLPPQPFAILAMPRTGTHYLEELVNEHPNVLSNGELLNTYDTNWPDKERLLLSDRELLERAFLRYPPHSDKKVTHVGCKINEPQFQERPSFFAELTAWPGLKVILVIRRNTLESLRSFVQARQTRQWLKFKSDSSAPPPPVMLPFATCEAYFKAADDFHARVVYAFDSSRIRLIEYERLLRDPVPCVATVLDFLGAPALQLADRGILRRQETRPLDQTVRNFHELRVHFANGPYARFFELAND</sequence>
<organism>
    <name type="scientific">Rhizobium meliloti (strain 1021)</name>
    <name type="common">Ensifer meliloti</name>
    <name type="synonym">Sinorhizobium meliloti</name>
    <dbReference type="NCBI Taxonomy" id="266834"/>
    <lineage>
        <taxon>Bacteria</taxon>
        <taxon>Pseudomonadati</taxon>
        <taxon>Pseudomonadota</taxon>
        <taxon>Alphaproteobacteria</taxon>
        <taxon>Hyphomicrobiales</taxon>
        <taxon>Rhizobiaceae</taxon>
        <taxon>Sinorhizobium/Ensifer group</taxon>
        <taxon>Sinorhizobium</taxon>
    </lineage>
</organism>
<protein>
    <recommendedName>
        <fullName>Nodulation protein H</fullName>
        <ecNumber>2.8.2.-</ecNumber>
    </recommendedName>
    <alternativeName>
        <fullName>Host-specificity of nodulation protein D</fullName>
    </alternativeName>
</protein>
<proteinExistence type="predicted"/>
<gene>
    <name type="primary">nodH</name>
    <name type="synonym">hsnD</name>
    <name type="ordered locus">RA0464</name>
    <name type="ORF">SMa0851</name>
</gene>
<name>NODH_RHIME</name>